<dbReference type="EMBL" id="AM295250">
    <property type="protein sequence ID" value="CAL28136.1"/>
    <property type="molecule type" value="Genomic_DNA"/>
</dbReference>
<dbReference type="RefSeq" id="WP_015900476.1">
    <property type="nucleotide sequence ID" value="NC_012121.1"/>
</dbReference>
<dbReference type="SMR" id="B9DNH2"/>
<dbReference type="GeneID" id="93793654"/>
<dbReference type="KEGG" id="sca:SCA_1229"/>
<dbReference type="eggNOG" id="COG4472">
    <property type="taxonomic scope" value="Bacteria"/>
</dbReference>
<dbReference type="HOGENOM" id="CLU_162466_0_0_9"/>
<dbReference type="OrthoDB" id="9796303at2"/>
<dbReference type="BioCyc" id="SCAR396513:SCA_RS06150-MONOMER"/>
<dbReference type="Proteomes" id="UP000000444">
    <property type="component" value="Chromosome"/>
</dbReference>
<dbReference type="HAMAP" id="MF_01507">
    <property type="entry name" value="UPF0297"/>
    <property type="match status" value="1"/>
</dbReference>
<dbReference type="InterPro" id="IPR009309">
    <property type="entry name" value="IreB"/>
</dbReference>
<dbReference type="NCBIfam" id="NF003997">
    <property type="entry name" value="PRK05473.1"/>
    <property type="match status" value="1"/>
</dbReference>
<dbReference type="PANTHER" id="PTHR40067">
    <property type="entry name" value="UPF0297 PROTEIN YRZL"/>
    <property type="match status" value="1"/>
</dbReference>
<dbReference type="PANTHER" id="PTHR40067:SF1">
    <property type="entry name" value="UPF0297 PROTEIN YRZL"/>
    <property type="match status" value="1"/>
</dbReference>
<dbReference type="Pfam" id="PF06135">
    <property type="entry name" value="IreB"/>
    <property type="match status" value="1"/>
</dbReference>
<dbReference type="PIRSF" id="PIRSF037258">
    <property type="entry name" value="DUF965_bac"/>
    <property type="match status" value="1"/>
</dbReference>
<feature type="chain" id="PRO_1000185044" description="UPF0297 protein Sca_1229">
    <location>
        <begin position="1"/>
        <end position="87"/>
    </location>
</feature>
<name>Y1229_STACT</name>
<gene>
    <name type="ordered locus">Sca_1229</name>
</gene>
<reference key="1">
    <citation type="journal article" date="2009" name="Appl. Environ. Microbiol.">
        <title>Genome analysis of the meat starter culture bacterium Staphylococcus carnosus TM300.</title>
        <authorList>
            <person name="Rosenstein R."/>
            <person name="Nerz C."/>
            <person name="Biswas L."/>
            <person name="Resch A."/>
            <person name="Raddatz G."/>
            <person name="Schuster S.C."/>
            <person name="Goetz F."/>
        </authorList>
    </citation>
    <scope>NUCLEOTIDE SEQUENCE [LARGE SCALE GENOMIC DNA]</scope>
    <source>
        <strain>TM300</strain>
    </source>
</reference>
<proteinExistence type="inferred from homology"/>
<sequence length="87" mass="10206">MNNYDKTMRFNLDDVPKENVKSVLTNVYNTLKERGYDPVNQIVGYLLSGDPAYIPRHNEARNQIRRIDRDEIMEELVSNYLNASKDN</sequence>
<organism>
    <name type="scientific">Staphylococcus carnosus (strain TM300)</name>
    <dbReference type="NCBI Taxonomy" id="396513"/>
    <lineage>
        <taxon>Bacteria</taxon>
        <taxon>Bacillati</taxon>
        <taxon>Bacillota</taxon>
        <taxon>Bacilli</taxon>
        <taxon>Bacillales</taxon>
        <taxon>Staphylococcaceae</taxon>
        <taxon>Staphylococcus</taxon>
    </lineage>
</organism>
<accession>B9DNH2</accession>
<keyword id="KW-1185">Reference proteome</keyword>
<comment type="similarity">
    <text evidence="1">Belongs to the UPF0297 family.</text>
</comment>
<evidence type="ECO:0000255" key="1">
    <source>
        <dbReference type="HAMAP-Rule" id="MF_01507"/>
    </source>
</evidence>
<protein>
    <recommendedName>
        <fullName evidence="1">UPF0297 protein Sca_1229</fullName>
    </recommendedName>
</protein>